<organism>
    <name type="scientific">Beutenbergia cavernae (strain ATCC BAA-8 / DSM 12333 / CCUG 43141 / JCM 11478 / NBRC 16432 / NCIMB 13614 / HKI 0122)</name>
    <dbReference type="NCBI Taxonomy" id="471853"/>
    <lineage>
        <taxon>Bacteria</taxon>
        <taxon>Bacillati</taxon>
        <taxon>Actinomycetota</taxon>
        <taxon>Actinomycetes</taxon>
        <taxon>Micrococcales</taxon>
        <taxon>Beutenbergiaceae</taxon>
        <taxon>Beutenbergia</taxon>
    </lineage>
</organism>
<sequence>MPRSLKKGPFVDGHLQKKVDDQNTKGTKNVIKTWSRRSLITPDFLGHTFAVHDGRKHVPVFVTEAMVGHKLGEFAPTRTYRGHDKDDRKARRR</sequence>
<accession>C5C0I7</accession>
<name>RS19_BEUC1</name>
<evidence type="ECO:0000255" key="1">
    <source>
        <dbReference type="HAMAP-Rule" id="MF_00531"/>
    </source>
</evidence>
<evidence type="ECO:0000256" key="2">
    <source>
        <dbReference type="SAM" id="MobiDB-lite"/>
    </source>
</evidence>
<evidence type="ECO:0000305" key="3"/>
<comment type="function">
    <text evidence="1">Protein S19 forms a complex with S13 that binds strongly to the 16S ribosomal RNA.</text>
</comment>
<comment type="similarity">
    <text evidence="1">Belongs to the universal ribosomal protein uS19 family.</text>
</comment>
<proteinExistence type="inferred from homology"/>
<dbReference type="EMBL" id="CP001618">
    <property type="protein sequence ID" value="ACQ81383.1"/>
    <property type="molecule type" value="Genomic_DNA"/>
</dbReference>
<dbReference type="RefSeq" id="WP_015883623.1">
    <property type="nucleotide sequence ID" value="NC_012669.1"/>
</dbReference>
<dbReference type="SMR" id="C5C0I7"/>
<dbReference type="STRING" id="471853.Bcav_3139"/>
<dbReference type="KEGG" id="bcv:Bcav_3139"/>
<dbReference type="eggNOG" id="COG0185">
    <property type="taxonomic scope" value="Bacteria"/>
</dbReference>
<dbReference type="HOGENOM" id="CLU_144911_0_1_11"/>
<dbReference type="OrthoDB" id="9797833at2"/>
<dbReference type="Proteomes" id="UP000007962">
    <property type="component" value="Chromosome"/>
</dbReference>
<dbReference type="GO" id="GO:0005737">
    <property type="term" value="C:cytoplasm"/>
    <property type="evidence" value="ECO:0007669"/>
    <property type="project" value="UniProtKB-ARBA"/>
</dbReference>
<dbReference type="GO" id="GO:0015935">
    <property type="term" value="C:small ribosomal subunit"/>
    <property type="evidence" value="ECO:0007669"/>
    <property type="project" value="InterPro"/>
</dbReference>
<dbReference type="GO" id="GO:0019843">
    <property type="term" value="F:rRNA binding"/>
    <property type="evidence" value="ECO:0007669"/>
    <property type="project" value="UniProtKB-UniRule"/>
</dbReference>
<dbReference type="GO" id="GO:0003735">
    <property type="term" value="F:structural constituent of ribosome"/>
    <property type="evidence" value="ECO:0007669"/>
    <property type="project" value="InterPro"/>
</dbReference>
<dbReference type="GO" id="GO:0000028">
    <property type="term" value="P:ribosomal small subunit assembly"/>
    <property type="evidence" value="ECO:0007669"/>
    <property type="project" value="TreeGrafter"/>
</dbReference>
<dbReference type="GO" id="GO:0006412">
    <property type="term" value="P:translation"/>
    <property type="evidence" value="ECO:0007669"/>
    <property type="project" value="UniProtKB-UniRule"/>
</dbReference>
<dbReference type="FunFam" id="3.30.860.10:FF:000001">
    <property type="entry name" value="30S ribosomal protein S19"/>
    <property type="match status" value="1"/>
</dbReference>
<dbReference type="Gene3D" id="3.30.860.10">
    <property type="entry name" value="30s Ribosomal Protein S19, Chain A"/>
    <property type="match status" value="1"/>
</dbReference>
<dbReference type="HAMAP" id="MF_00531">
    <property type="entry name" value="Ribosomal_uS19"/>
    <property type="match status" value="1"/>
</dbReference>
<dbReference type="InterPro" id="IPR002222">
    <property type="entry name" value="Ribosomal_uS19"/>
</dbReference>
<dbReference type="InterPro" id="IPR005732">
    <property type="entry name" value="Ribosomal_uS19_bac-type"/>
</dbReference>
<dbReference type="InterPro" id="IPR020934">
    <property type="entry name" value="Ribosomal_uS19_CS"/>
</dbReference>
<dbReference type="InterPro" id="IPR023575">
    <property type="entry name" value="Ribosomal_uS19_SF"/>
</dbReference>
<dbReference type="NCBIfam" id="TIGR01050">
    <property type="entry name" value="rpsS_bact"/>
    <property type="match status" value="1"/>
</dbReference>
<dbReference type="PANTHER" id="PTHR11880">
    <property type="entry name" value="RIBOSOMAL PROTEIN S19P FAMILY MEMBER"/>
    <property type="match status" value="1"/>
</dbReference>
<dbReference type="PANTHER" id="PTHR11880:SF8">
    <property type="entry name" value="SMALL RIBOSOMAL SUBUNIT PROTEIN US19M"/>
    <property type="match status" value="1"/>
</dbReference>
<dbReference type="Pfam" id="PF00203">
    <property type="entry name" value="Ribosomal_S19"/>
    <property type="match status" value="1"/>
</dbReference>
<dbReference type="PIRSF" id="PIRSF002144">
    <property type="entry name" value="Ribosomal_S19"/>
    <property type="match status" value="1"/>
</dbReference>
<dbReference type="PRINTS" id="PR00975">
    <property type="entry name" value="RIBOSOMALS19"/>
</dbReference>
<dbReference type="SUPFAM" id="SSF54570">
    <property type="entry name" value="Ribosomal protein S19"/>
    <property type="match status" value="1"/>
</dbReference>
<dbReference type="PROSITE" id="PS00323">
    <property type="entry name" value="RIBOSOMAL_S19"/>
    <property type="match status" value="1"/>
</dbReference>
<protein>
    <recommendedName>
        <fullName evidence="1">Small ribosomal subunit protein uS19</fullName>
    </recommendedName>
    <alternativeName>
        <fullName evidence="3">30S ribosomal protein S19</fullName>
    </alternativeName>
</protein>
<feature type="chain" id="PRO_1000211796" description="Small ribosomal subunit protein uS19">
    <location>
        <begin position="1"/>
        <end position="93"/>
    </location>
</feature>
<feature type="region of interest" description="Disordered" evidence="2">
    <location>
        <begin position="1"/>
        <end position="25"/>
    </location>
</feature>
<feature type="region of interest" description="Disordered" evidence="2">
    <location>
        <begin position="74"/>
        <end position="93"/>
    </location>
</feature>
<feature type="compositionally biased region" description="Basic and acidic residues" evidence="2">
    <location>
        <begin position="14"/>
        <end position="23"/>
    </location>
</feature>
<feature type="compositionally biased region" description="Basic and acidic residues" evidence="2">
    <location>
        <begin position="81"/>
        <end position="93"/>
    </location>
</feature>
<gene>
    <name evidence="1" type="primary">rpsS</name>
    <name type="ordered locus">Bcav_3139</name>
</gene>
<keyword id="KW-1185">Reference proteome</keyword>
<keyword id="KW-0687">Ribonucleoprotein</keyword>
<keyword id="KW-0689">Ribosomal protein</keyword>
<keyword id="KW-0694">RNA-binding</keyword>
<keyword id="KW-0699">rRNA-binding</keyword>
<reference key="1">
    <citation type="journal article" date="2009" name="Stand. Genomic Sci.">
        <title>Complete genome sequence of Beutenbergia cavernae type strain (HKI 0122).</title>
        <authorList>
            <person name="Land M."/>
            <person name="Pukall R."/>
            <person name="Abt B."/>
            <person name="Goker M."/>
            <person name="Rohde M."/>
            <person name="Glavina Del Rio T."/>
            <person name="Tice H."/>
            <person name="Copeland A."/>
            <person name="Cheng J.F."/>
            <person name="Lucas S."/>
            <person name="Chen F."/>
            <person name="Nolan M."/>
            <person name="Bruce D."/>
            <person name="Goodwin L."/>
            <person name="Pitluck S."/>
            <person name="Ivanova N."/>
            <person name="Mavromatis K."/>
            <person name="Ovchinnikova G."/>
            <person name="Pati A."/>
            <person name="Chen A."/>
            <person name="Palaniappan K."/>
            <person name="Hauser L."/>
            <person name="Chang Y.J."/>
            <person name="Jefferies C.C."/>
            <person name="Saunders E."/>
            <person name="Brettin T."/>
            <person name="Detter J.C."/>
            <person name="Han C."/>
            <person name="Chain P."/>
            <person name="Bristow J."/>
            <person name="Eisen J.A."/>
            <person name="Markowitz V."/>
            <person name="Hugenholtz P."/>
            <person name="Kyrpides N.C."/>
            <person name="Klenk H.P."/>
            <person name="Lapidus A."/>
        </authorList>
    </citation>
    <scope>NUCLEOTIDE SEQUENCE [LARGE SCALE GENOMIC DNA]</scope>
    <source>
        <strain>ATCC BAA-8 / DSM 12333 / CCUG 43141 / JCM 11478 / NBRC 16432 / NCIMB 13614 / HKI 0122</strain>
    </source>
</reference>